<protein>
    <recommendedName>
        <fullName evidence="1">Holo-[acyl-carrier-protein] synthase</fullName>
        <shortName evidence="1">Holo-ACP synthase</shortName>
        <ecNumber evidence="1">2.7.8.7</ecNumber>
    </recommendedName>
    <alternativeName>
        <fullName evidence="1">4'-phosphopantetheinyl transferase AcpS</fullName>
    </alternativeName>
</protein>
<feature type="chain" id="PRO_1000075657" description="Holo-[acyl-carrier-protein] synthase">
    <location>
        <begin position="1"/>
        <end position="131"/>
    </location>
</feature>
<feature type="binding site" evidence="1">
    <location>
        <position position="9"/>
    </location>
    <ligand>
        <name>Mg(2+)</name>
        <dbReference type="ChEBI" id="CHEBI:18420"/>
    </ligand>
</feature>
<feature type="binding site" evidence="1">
    <location>
        <position position="58"/>
    </location>
    <ligand>
        <name>Mg(2+)</name>
        <dbReference type="ChEBI" id="CHEBI:18420"/>
    </ligand>
</feature>
<reference key="1">
    <citation type="submission" date="2007-11" db="EMBL/GenBank/DDBJ databases">
        <authorList>
            <consortium name="The Salmonella enterica serovar Arizonae Genome Sequencing Project"/>
            <person name="McClelland M."/>
            <person name="Sanderson E.K."/>
            <person name="Porwollik S."/>
            <person name="Spieth J."/>
            <person name="Clifton W.S."/>
            <person name="Fulton R."/>
            <person name="Chunyan W."/>
            <person name="Wollam A."/>
            <person name="Shah N."/>
            <person name="Pepin K."/>
            <person name="Bhonagiri V."/>
            <person name="Nash W."/>
            <person name="Johnson M."/>
            <person name="Thiruvilangam P."/>
            <person name="Wilson R."/>
        </authorList>
    </citation>
    <scope>NUCLEOTIDE SEQUENCE [LARGE SCALE GENOMIC DNA]</scope>
    <source>
        <strain>ATCC BAA-731 / CDC346-86 / RSK2980</strain>
    </source>
</reference>
<sequence length="131" mass="14529">MAILGLGTDIVEISRIEAVISRSGERLARRVLSANEWAIWETHQQPVRFLAKRFAVKEAAAKAFGTGIRNGLAFNQFEVFNDELGKPRLRLWGEALTLAEKLGVTHMHVTLADERHYACATVILESQISAG</sequence>
<proteinExistence type="inferred from homology"/>
<dbReference type="EC" id="2.7.8.7" evidence="1"/>
<dbReference type="EMBL" id="CP000880">
    <property type="protein sequence ID" value="ABX20241.1"/>
    <property type="molecule type" value="Genomic_DNA"/>
</dbReference>
<dbReference type="SMR" id="A9MGY0"/>
<dbReference type="STRING" id="41514.SARI_00301"/>
<dbReference type="KEGG" id="ses:SARI_00301"/>
<dbReference type="HOGENOM" id="CLU_089696_3_1_6"/>
<dbReference type="Proteomes" id="UP000002084">
    <property type="component" value="Chromosome"/>
</dbReference>
<dbReference type="GO" id="GO:0005737">
    <property type="term" value="C:cytoplasm"/>
    <property type="evidence" value="ECO:0007669"/>
    <property type="project" value="UniProtKB-SubCell"/>
</dbReference>
<dbReference type="GO" id="GO:0008897">
    <property type="term" value="F:holo-[acyl-carrier-protein] synthase activity"/>
    <property type="evidence" value="ECO:0007669"/>
    <property type="project" value="UniProtKB-UniRule"/>
</dbReference>
<dbReference type="GO" id="GO:0000287">
    <property type="term" value="F:magnesium ion binding"/>
    <property type="evidence" value="ECO:0007669"/>
    <property type="project" value="UniProtKB-UniRule"/>
</dbReference>
<dbReference type="GO" id="GO:0006633">
    <property type="term" value="P:fatty acid biosynthetic process"/>
    <property type="evidence" value="ECO:0007669"/>
    <property type="project" value="UniProtKB-UniRule"/>
</dbReference>
<dbReference type="FunFam" id="3.90.470.20:FF:000001">
    <property type="entry name" value="Holo-[acyl-carrier-protein] synthase"/>
    <property type="match status" value="1"/>
</dbReference>
<dbReference type="Gene3D" id="3.90.470.20">
    <property type="entry name" value="4'-phosphopantetheinyl transferase domain"/>
    <property type="match status" value="1"/>
</dbReference>
<dbReference type="HAMAP" id="MF_00101">
    <property type="entry name" value="AcpS"/>
    <property type="match status" value="1"/>
</dbReference>
<dbReference type="InterPro" id="IPR008278">
    <property type="entry name" value="4-PPantetheinyl_Trfase_dom"/>
</dbReference>
<dbReference type="InterPro" id="IPR037143">
    <property type="entry name" value="4-PPantetheinyl_Trfase_dom_sf"/>
</dbReference>
<dbReference type="InterPro" id="IPR002582">
    <property type="entry name" value="ACPS"/>
</dbReference>
<dbReference type="InterPro" id="IPR004568">
    <property type="entry name" value="Ppantetheine-prot_Trfase_dom"/>
</dbReference>
<dbReference type="NCBIfam" id="TIGR00516">
    <property type="entry name" value="acpS"/>
    <property type="match status" value="1"/>
</dbReference>
<dbReference type="NCBIfam" id="TIGR00556">
    <property type="entry name" value="pantethn_trn"/>
    <property type="match status" value="1"/>
</dbReference>
<dbReference type="Pfam" id="PF01648">
    <property type="entry name" value="ACPS"/>
    <property type="match status" value="1"/>
</dbReference>
<dbReference type="SUPFAM" id="SSF56214">
    <property type="entry name" value="4'-phosphopantetheinyl transferase"/>
    <property type="match status" value="1"/>
</dbReference>
<organism>
    <name type="scientific">Salmonella arizonae (strain ATCC BAA-731 / CDC346-86 / RSK2980)</name>
    <dbReference type="NCBI Taxonomy" id="41514"/>
    <lineage>
        <taxon>Bacteria</taxon>
        <taxon>Pseudomonadati</taxon>
        <taxon>Pseudomonadota</taxon>
        <taxon>Gammaproteobacteria</taxon>
        <taxon>Enterobacterales</taxon>
        <taxon>Enterobacteriaceae</taxon>
        <taxon>Salmonella</taxon>
    </lineage>
</organism>
<comment type="function">
    <text evidence="1">Transfers the 4'-phosphopantetheine moiety from coenzyme A to a Ser of acyl-carrier-protein.</text>
</comment>
<comment type="catalytic activity">
    <reaction evidence="1">
        <text>apo-[ACP] + CoA = holo-[ACP] + adenosine 3',5'-bisphosphate + H(+)</text>
        <dbReference type="Rhea" id="RHEA:12068"/>
        <dbReference type="Rhea" id="RHEA-COMP:9685"/>
        <dbReference type="Rhea" id="RHEA-COMP:9690"/>
        <dbReference type="ChEBI" id="CHEBI:15378"/>
        <dbReference type="ChEBI" id="CHEBI:29999"/>
        <dbReference type="ChEBI" id="CHEBI:57287"/>
        <dbReference type="ChEBI" id="CHEBI:58343"/>
        <dbReference type="ChEBI" id="CHEBI:64479"/>
        <dbReference type="EC" id="2.7.8.7"/>
    </reaction>
</comment>
<comment type="cofactor">
    <cofactor evidence="1">
        <name>Mg(2+)</name>
        <dbReference type="ChEBI" id="CHEBI:18420"/>
    </cofactor>
</comment>
<comment type="subcellular location">
    <subcellularLocation>
        <location evidence="1">Cytoplasm</location>
    </subcellularLocation>
</comment>
<comment type="similarity">
    <text evidence="1">Belongs to the P-Pant transferase superfamily. AcpS family.</text>
</comment>
<gene>
    <name evidence="1" type="primary">acpS</name>
    <name type="ordered locus">SARI_00301</name>
</gene>
<keyword id="KW-0963">Cytoplasm</keyword>
<keyword id="KW-0275">Fatty acid biosynthesis</keyword>
<keyword id="KW-0276">Fatty acid metabolism</keyword>
<keyword id="KW-0444">Lipid biosynthesis</keyword>
<keyword id="KW-0443">Lipid metabolism</keyword>
<keyword id="KW-0460">Magnesium</keyword>
<keyword id="KW-0479">Metal-binding</keyword>
<keyword id="KW-1185">Reference proteome</keyword>
<keyword id="KW-0808">Transferase</keyword>
<evidence type="ECO:0000255" key="1">
    <source>
        <dbReference type="HAMAP-Rule" id="MF_00101"/>
    </source>
</evidence>
<name>ACPS_SALAR</name>
<accession>A9MGY0</accession>